<name>YJL2B_YEAST</name>
<protein>
    <recommendedName>
        <fullName>Putative UPF0377 protein YJL222W-B</fullName>
    </recommendedName>
</protein>
<feature type="chain" id="PRO_0000406004" description="Putative UPF0377 protein YJL222W-B">
    <location>
        <begin position="1"/>
        <end position="45"/>
    </location>
</feature>
<evidence type="ECO:0000305" key="1"/>
<evidence type="ECO:0000305" key="2">
    <source>
    </source>
</evidence>
<reference key="1">
    <citation type="journal article" date="1996" name="EMBO J.">
        <title>Complete nucleotide sequence of Saccharomyces cerevisiae chromosome X.</title>
        <authorList>
            <person name="Galibert F."/>
            <person name="Alexandraki D."/>
            <person name="Baur A."/>
            <person name="Boles E."/>
            <person name="Chalwatzis N."/>
            <person name="Chuat J.-C."/>
            <person name="Coster F."/>
            <person name="Cziepluch C."/>
            <person name="de Haan M."/>
            <person name="Domdey H."/>
            <person name="Durand P."/>
            <person name="Entian K.-D."/>
            <person name="Gatius M."/>
            <person name="Goffeau A."/>
            <person name="Grivell L.A."/>
            <person name="Hennemann A."/>
            <person name="Herbert C.J."/>
            <person name="Heumann K."/>
            <person name="Hilger F."/>
            <person name="Hollenberg C.P."/>
            <person name="Huang M.-E."/>
            <person name="Jacq C."/>
            <person name="Jauniaux J.-C."/>
            <person name="Katsoulou C."/>
            <person name="Kirchrath L."/>
            <person name="Kleine K."/>
            <person name="Kordes E."/>
            <person name="Koetter P."/>
            <person name="Liebl S."/>
            <person name="Louis E.J."/>
            <person name="Manus V."/>
            <person name="Mewes H.-W."/>
            <person name="Miosga T."/>
            <person name="Obermaier B."/>
            <person name="Perea J."/>
            <person name="Pohl T.M."/>
            <person name="Portetelle D."/>
            <person name="Pujol A."/>
            <person name="Purnelle B."/>
            <person name="Ramezani Rad M."/>
            <person name="Rasmussen S.W."/>
            <person name="Rose M."/>
            <person name="Rossau R."/>
            <person name="Schaaff-Gerstenschlaeger I."/>
            <person name="Smits P.H.M."/>
            <person name="Scarcez T."/>
            <person name="Soriano N."/>
            <person name="To Van D."/>
            <person name="Tzermia M."/>
            <person name="Van Broekhoven A."/>
            <person name="Vandenbol M."/>
            <person name="Wedler H."/>
            <person name="von Wettstein D."/>
            <person name="Wambutt R."/>
            <person name="Zagulski M."/>
            <person name="Zollner A."/>
            <person name="Karpfinger-Hartl L."/>
        </authorList>
    </citation>
    <scope>NUCLEOTIDE SEQUENCE [LARGE SCALE GENOMIC DNA]</scope>
    <source>
        <strain>ATCC 204508 / S288c</strain>
    </source>
</reference>
<reference key="2">
    <citation type="journal article" date="2014" name="G3 (Bethesda)">
        <title>The reference genome sequence of Saccharomyces cerevisiae: Then and now.</title>
        <authorList>
            <person name="Engel S.R."/>
            <person name="Dietrich F.S."/>
            <person name="Fisk D.G."/>
            <person name="Binkley G."/>
            <person name="Balakrishnan R."/>
            <person name="Costanzo M.C."/>
            <person name="Dwight S.S."/>
            <person name="Hitz B.C."/>
            <person name="Karra K."/>
            <person name="Nash R.S."/>
            <person name="Weng S."/>
            <person name="Wong E.D."/>
            <person name="Lloyd P."/>
            <person name="Skrzypek M.S."/>
            <person name="Miyasato S.R."/>
            <person name="Simison M."/>
            <person name="Cherry J.M."/>
        </authorList>
    </citation>
    <scope>GENOME REANNOTATION</scope>
    <source>
        <strain>ATCC 204508 / S288c</strain>
    </source>
</reference>
<reference key="3">
    <citation type="journal article" date="2002" name="Nat. Biotechnol.">
        <title>An integrated approach for finding overlooked genes in yeast.</title>
        <authorList>
            <person name="Kumar A."/>
            <person name="Harrison P.M."/>
            <person name="Cheung K.-H."/>
            <person name="Lan N."/>
            <person name="Echols N."/>
            <person name="Bertone P."/>
            <person name="Miller P."/>
            <person name="Gerstein M.B."/>
            <person name="Snyder M."/>
        </authorList>
    </citation>
    <scope>NUCLEOTIDE SEQUENCE [GENOMIC DNA]</scope>
</reference>
<sequence length="45" mass="5420">MKMFLFLNESYIFDRLRMWSIVLWHSCVFVCAECENANYRGAEVP</sequence>
<dbReference type="EMBL" id="Z49497">
    <property type="status" value="NOT_ANNOTATED_CDS"/>
    <property type="molecule type" value="Genomic_DNA"/>
</dbReference>
<dbReference type="EMBL" id="AF480002">
    <property type="protein sequence ID" value="AAL79315.1"/>
    <property type="molecule type" value="Genomic_DNA"/>
</dbReference>
<dbReference type="EnsemblFungi" id="YJL222W-B_mRNA">
    <property type="protein sequence ID" value="YJL222W-B"/>
    <property type="gene ID" value="YJL222W-B"/>
</dbReference>
<dbReference type="AGR" id="SGD:S000028664"/>
<dbReference type="SGD" id="S000028664">
    <property type="gene designation" value="YJL222W-B"/>
</dbReference>
<dbReference type="GeneTree" id="ENSGT00940000177730"/>
<dbReference type="HOGENOM" id="CLU_3207946_0_0_1"/>
<accession>P0CL24</accession>
<accession>P40436</accession>
<accession>Q8TGJ9</accession>
<comment type="similarity">
    <text evidence="1">Belongs to the UPF0377 family.</text>
</comment>
<comment type="caution">
    <text evidence="2">Product of a dubious gene prediction unlikely to encode a functional protein. Because of that it is not part of the S.cerevisiae S288c complete/reference proteome set.</text>
</comment>
<proteinExistence type="uncertain"/>
<gene>
    <name type="ordered locus">YJL222W-B</name>
</gene>
<organism>
    <name type="scientific">Saccharomyces cerevisiae (strain ATCC 204508 / S288c)</name>
    <name type="common">Baker's yeast</name>
    <dbReference type="NCBI Taxonomy" id="559292"/>
    <lineage>
        <taxon>Eukaryota</taxon>
        <taxon>Fungi</taxon>
        <taxon>Dikarya</taxon>
        <taxon>Ascomycota</taxon>
        <taxon>Saccharomycotina</taxon>
        <taxon>Saccharomycetes</taxon>
        <taxon>Saccharomycetales</taxon>
        <taxon>Saccharomycetaceae</taxon>
        <taxon>Saccharomyces</taxon>
    </lineage>
</organism>